<comment type="function">
    <text evidence="1">Catalyzes the phosphorolysis of diverse nucleosides, yielding D-ribose 1-phosphate and the respective free bases. Can use uridine, adenosine, guanosine, cytidine, thymidine, inosine and xanthosine as substrates. Also catalyzes the reverse reactions.</text>
</comment>
<comment type="catalytic activity">
    <reaction evidence="1">
        <text>a purine D-ribonucleoside + phosphate = a purine nucleobase + alpha-D-ribose 1-phosphate</text>
        <dbReference type="Rhea" id="RHEA:19805"/>
        <dbReference type="ChEBI" id="CHEBI:26386"/>
        <dbReference type="ChEBI" id="CHEBI:43474"/>
        <dbReference type="ChEBI" id="CHEBI:57720"/>
        <dbReference type="ChEBI" id="CHEBI:142355"/>
        <dbReference type="EC" id="2.4.2.1"/>
    </reaction>
</comment>
<comment type="catalytic activity">
    <reaction evidence="1">
        <text>adenosine + phosphate = alpha-D-ribose 1-phosphate + adenine</text>
        <dbReference type="Rhea" id="RHEA:27642"/>
        <dbReference type="ChEBI" id="CHEBI:16335"/>
        <dbReference type="ChEBI" id="CHEBI:16708"/>
        <dbReference type="ChEBI" id="CHEBI:43474"/>
        <dbReference type="ChEBI" id="CHEBI:57720"/>
        <dbReference type="EC" id="2.4.2.1"/>
    </reaction>
</comment>
<comment type="catalytic activity">
    <reaction evidence="1">
        <text>cytidine + phosphate = cytosine + alpha-D-ribose 1-phosphate</text>
        <dbReference type="Rhea" id="RHEA:52540"/>
        <dbReference type="ChEBI" id="CHEBI:16040"/>
        <dbReference type="ChEBI" id="CHEBI:17562"/>
        <dbReference type="ChEBI" id="CHEBI:43474"/>
        <dbReference type="ChEBI" id="CHEBI:57720"/>
        <dbReference type="EC" id="2.4.2.2"/>
    </reaction>
</comment>
<comment type="catalytic activity">
    <reaction evidence="1">
        <text>guanosine + phosphate = alpha-D-ribose 1-phosphate + guanine</text>
        <dbReference type="Rhea" id="RHEA:13233"/>
        <dbReference type="ChEBI" id="CHEBI:16235"/>
        <dbReference type="ChEBI" id="CHEBI:16750"/>
        <dbReference type="ChEBI" id="CHEBI:43474"/>
        <dbReference type="ChEBI" id="CHEBI:57720"/>
        <dbReference type="EC" id="2.4.2.1"/>
    </reaction>
</comment>
<comment type="catalytic activity">
    <reaction evidence="1">
        <text>inosine + phosphate = alpha-D-ribose 1-phosphate + hypoxanthine</text>
        <dbReference type="Rhea" id="RHEA:27646"/>
        <dbReference type="ChEBI" id="CHEBI:17368"/>
        <dbReference type="ChEBI" id="CHEBI:17596"/>
        <dbReference type="ChEBI" id="CHEBI:43474"/>
        <dbReference type="ChEBI" id="CHEBI:57720"/>
        <dbReference type="EC" id="2.4.2.1"/>
    </reaction>
</comment>
<comment type="catalytic activity">
    <reaction evidence="1">
        <text>thymidine + phosphate = 2-deoxy-alpha-D-ribose 1-phosphate + thymine</text>
        <dbReference type="Rhea" id="RHEA:16037"/>
        <dbReference type="ChEBI" id="CHEBI:17748"/>
        <dbReference type="ChEBI" id="CHEBI:17821"/>
        <dbReference type="ChEBI" id="CHEBI:43474"/>
        <dbReference type="ChEBI" id="CHEBI:57259"/>
        <dbReference type="EC" id="2.4.2.2"/>
    </reaction>
</comment>
<comment type="catalytic activity">
    <reaction evidence="1">
        <text>uridine + phosphate = alpha-D-ribose 1-phosphate + uracil</text>
        <dbReference type="Rhea" id="RHEA:24388"/>
        <dbReference type="ChEBI" id="CHEBI:16704"/>
        <dbReference type="ChEBI" id="CHEBI:17568"/>
        <dbReference type="ChEBI" id="CHEBI:43474"/>
        <dbReference type="ChEBI" id="CHEBI:57720"/>
        <dbReference type="EC" id="2.4.2.2"/>
    </reaction>
</comment>
<comment type="catalytic activity">
    <reaction evidence="1">
        <text>xanthosine + phosphate = alpha-D-ribose 1-phosphate + xanthine</text>
        <dbReference type="Rhea" id="RHEA:27638"/>
        <dbReference type="ChEBI" id="CHEBI:17712"/>
        <dbReference type="ChEBI" id="CHEBI:18107"/>
        <dbReference type="ChEBI" id="CHEBI:43474"/>
        <dbReference type="ChEBI" id="CHEBI:57720"/>
        <dbReference type="EC" id="2.4.2.1"/>
    </reaction>
</comment>
<comment type="similarity">
    <text evidence="1">Belongs to the nucleoside phosphorylase PpnP family.</text>
</comment>
<name>PPNP_WOLSU</name>
<accession>Q7MSS9</accession>
<keyword id="KW-0328">Glycosyltransferase</keyword>
<keyword id="KW-1185">Reference proteome</keyword>
<keyword id="KW-0808">Transferase</keyword>
<dbReference type="EC" id="2.4.2.1" evidence="1"/>
<dbReference type="EC" id="2.4.2.2" evidence="1"/>
<dbReference type="EMBL" id="BX571657">
    <property type="protein sequence ID" value="CAE09327.1"/>
    <property type="molecule type" value="Genomic_DNA"/>
</dbReference>
<dbReference type="SMR" id="Q7MSS9"/>
<dbReference type="STRING" id="273121.WS0164"/>
<dbReference type="KEGG" id="wsu:WS0164"/>
<dbReference type="eggNOG" id="COG3123">
    <property type="taxonomic scope" value="Bacteria"/>
</dbReference>
<dbReference type="HOGENOM" id="CLU_157874_1_0_7"/>
<dbReference type="Proteomes" id="UP000000422">
    <property type="component" value="Chromosome"/>
</dbReference>
<dbReference type="GO" id="GO:0005829">
    <property type="term" value="C:cytosol"/>
    <property type="evidence" value="ECO:0007669"/>
    <property type="project" value="TreeGrafter"/>
</dbReference>
<dbReference type="GO" id="GO:0047975">
    <property type="term" value="F:guanosine phosphorylase activity"/>
    <property type="evidence" value="ECO:0007669"/>
    <property type="project" value="UniProtKB-EC"/>
</dbReference>
<dbReference type="GO" id="GO:0004731">
    <property type="term" value="F:purine-nucleoside phosphorylase activity"/>
    <property type="evidence" value="ECO:0007669"/>
    <property type="project" value="UniProtKB-UniRule"/>
</dbReference>
<dbReference type="GO" id="GO:0009032">
    <property type="term" value="F:thymidine phosphorylase activity"/>
    <property type="evidence" value="ECO:0007669"/>
    <property type="project" value="UniProtKB-EC"/>
</dbReference>
<dbReference type="GO" id="GO:0004850">
    <property type="term" value="F:uridine phosphorylase activity"/>
    <property type="evidence" value="ECO:0007669"/>
    <property type="project" value="UniProtKB-EC"/>
</dbReference>
<dbReference type="CDD" id="cd20296">
    <property type="entry name" value="cupin_PpnP-like"/>
    <property type="match status" value="1"/>
</dbReference>
<dbReference type="FunFam" id="2.60.120.10:FF:000016">
    <property type="entry name" value="Pyrimidine/purine nucleoside phosphorylase"/>
    <property type="match status" value="1"/>
</dbReference>
<dbReference type="Gene3D" id="2.60.120.10">
    <property type="entry name" value="Jelly Rolls"/>
    <property type="match status" value="1"/>
</dbReference>
<dbReference type="HAMAP" id="MF_01537">
    <property type="entry name" value="Nucleos_phosphorylase_PpnP"/>
    <property type="match status" value="1"/>
</dbReference>
<dbReference type="InterPro" id="IPR009664">
    <property type="entry name" value="Ppnp"/>
</dbReference>
<dbReference type="InterPro" id="IPR014710">
    <property type="entry name" value="RmlC-like_jellyroll"/>
</dbReference>
<dbReference type="InterPro" id="IPR011051">
    <property type="entry name" value="RmlC_Cupin_sf"/>
</dbReference>
<dbReference type="PANTHER" id="PTHR36540">
    <property type="entry name" value="PYRIMIDINE/PURINE NUCLEOSIDE PHOSPHORYLASE"/>
    <property type="match status" value="1"/>
</dbReference>
<dbReference type="PANTHER" id="PTHR36540:SF1">
    <property type="entry name" value="PYRIMIDINE_PURINE NUCLEOSIDE PHOSPHORYLASE"/>
    <property type="match status" value="1"/>
</dbReference>
<dbReference type="Pfam" id="PF06865">
    <property type="entry name" value="Ppnp"/>
    <property type="match status" value="1"/>
</dbReference>
<dbReference type="SUPFAM" id="SSF51182">
    <property type="entry name" value="RmlC-like cupins"/>
    <property type="match status" value="1"/>
</dbReference>
<sequence>MMQSFENVTVVKKANRYFDDKVTSRTVIFPDGSKKTLGIMLPGSYEFGTDKAEIMEILEGELEVFLPQESKWRTLRGGESFDVPAHSRFSLKVNETVDYCCSYVG</sequence>
<protein>
    <recommendedName>
        <fullName evidence="1">Pyrimidine/purine nucleoside phosphorylase</fullName>
        <ecNumber evidence="1">2.4.2.1</ecNumber>
        <ecNumber evidence="1">2.4.2.2</ecNumber>
    </recommendedName>
    <alternativeName>
        <fullName evidence="1">Adenosine phosphorylase</fullName>
    </alternativeName>
    <alternativeName>
        <fullName evidence="1">Cytidine phosphorylase</fullName>
    </alternativeName>
    <alternativeName>
        <fullName evidence="1">Guanosine phosphorylase</fullName>
    </alternativeName>
    <alternativeName>
        <fullName evidence="1">Inosine phosphorylase</fullName>
    </alternativeName>
    <alternativeName>
        <fullName evidence="1">Thymidine phosphorylase</fullName>
    </alternativeName>
    <alternativeName>
        <fullName evidence="1">Uridine phosphorylase</fullName>
    </alternativeName>
    <alternativeName>
        <fullName evidence="1">Xanthosine phosphorylase</fullName>
    </alternativeName>
</protein>
<evidence type="ECO:0000255" key="1">
    <source>
        <dbReference type="HAMAP-Rule" id="MF_01537"/>
    </source>
</evidence>
<proteinExistence type="inferred from homology"/>
<gene>
    <name evidence="1" type="primary">ppnP</name>
    <name type="ordered locus">WS0164</name>
</gene>
<reference key="1">
    <citation type="journal article" date="2003" name="Proc. Natl. Acad. Sci. U.S.A.">
        <title>Complete genome sequence and analysis of Wolinella succinogenes.</title>
        <authorList>
            <person name="Baar C."/>
            <person name="Eppinger M."/>
            <person name="Raddatz G."/>
            <person name="Simon J."/>
            <person name="Lanz C."/>
            <person name="Klimmek O."/>
            <person name="Nandakumar R."/>
            <person name="Gross R."/>
            <person name="Rosinus A."/>
            <person name="Keller H."/>
            <person name="Jagtap P."/>
            <person name="Linke B."/>
            <person name="Meyer F."/>
            <person name="Lederer H."/>
            <person name="Schuster S.C."/>
        </authorList>
    </citation>
    <scope>NUCLEOTIDE SEQUENCE [LARGE SCALE GENOMIC DNA]</scope>
    <source>
        <strain>ATCC 29543 / DSM 1740 / CCUG 13145 / JCM 31913 / LMG 7466 / NCTC 11488 / FDC 602W</strain>
    </source>
</reference>
<feature type="chain" id="PRO_0000211789" description="Pyrimidine/purine nucleoside phosphorylase">
    <location>
        <begin position="1"/>
        <end position="105"/>
    </location>
</feature>
<organism>
    <name type="scientific">Wolinella succinogenes (strain ATCC 29543 / DSM 1740 / CCUG 13145 / JCM 31913 / LMG 7466 / NCTC 11488 / FDC 602W)</name>
    <name type="common">Vibrio succinogenes</name>
    <dbReference type="NCBI Taxonomy" id="273121"/>
    <lineage>
        <taxon>Bacteria</taxon>
        <taxon>Pseudomonadati</taxon>
        <taxon>Campylobacterota</taxon>
        <taxon>Epsilonproteobacteria</taxon>
        <taxon>Campylobacterales</taxon>
        <taxon>Helicobacteraceae</taxon>
        <taxon>Wolinella</taxon>
    </lineage>
</organism>